<protein>
    <recommendedName>
        <fullName>Altered inheritance of mitochondria protein 6</fullName>
    </recommendedName>
</protein>
<name>AIM6_EREGS</name>
<dbReference type="EMBL" id="AE016815">
    <property type="protein sequence ID" value="AAS50582.1"/>
    <property type="molecule type" value="Genomic_DNA"/>
</dbReference>
<dbReference type="RefSeq" id="NP_982758.1">
    <property type="nucleotide sequence ID" value="NM_208111.1"/>
</dbReference>
<dbReference type="FunCoup" id="Q75E59">
    <property type="interactions" value="15"/>
</dbReference>
<dbReference type="EnsemblFungi" id="AAS50582">
    <property type="protein sequence ID" value="AAS50582"/>
    <property type="gene ID" value="AGOS_ABL189W"/>
</dbReference>
<dbReference type="GeneID" id="4618837"/>
<dbReference type="KEGG" id="ago:AGOS_ABL189W"/>
<dbReference type="eggNOG" id="ENOG502QVA8">
    <property type="taxonomic scope" value="Eukaryota"/>
</dbReference>
<dbReference type="HOGENOM" id="CLU_031561_1_1_1"/>
<dbReference type="InParanoid" id="Q75E59"/>
<dbReference type="OMA" id="VRYWGLP"/>
<dbReference type="OrthoDB" id="4153866at2759"/>
<dbReference type="Proteomes" id="UP000000591">
    <property type="component" value="Chromosome II"/>
</dbReference>
<dbReference type="GO" id="GO:0008081">
    <property type="term" value="F:phosphoric diester hydrolase activity"/>
    <property type="evidence" value="ECO:0007669"/>
    <property type="project" value="InterPro"/>
</dbReference>
<dbReference type="GO" id="GO:0006629">
    <property type="term" value="P:lipid metabolic process"/>
    <property type="evidence" value="ECO:0007669"/>
    <property type="project" value="InterPro"/>
</dbReference>
<dbReference type="CDD" id="cd08577">
    <property type="entry name" value="PI-PLCc_GDPD_SF_unchar3"/>
    <property type="match status" value="1"/>
</dbReference>
<dbReference type="InterPro" id="IPR039559">
    <property type="entry name" value="AIM6_PI-PLC-like_dom"/>
</dbReference>
<dbReference type="InterPro" id="IPR051236">
    <property type="entry name" value="HAT_RTT109-like"/>
</dbReference>
<dbReference type="InterPro" id="IPR017946">
    <property type="entry name" value="PLC-like_Pdiesterase_TIM-brl"/>
</dbReference>
<dbReference type="PANTHER" id="PTHR31571">
    <property type="entry name" value="ALTERED INHERITANCE OF MITOCHONDRIA PROTEIN 6"/>
    <property type="match status" value="1"/>
</dbReference>
<dbReference type="PANTHER" id="PTHR31571:SF1">
    <property type="entry name" value="ALTERED INHERITANCE OF MITOCHONDRIA PROTEIN 6"/>
    <property type="match status" value="1"/>
</dbReference>
<dbReference type="SUPFAM" id="SSF51695">
    <property type="entry name" value="PLC-like phosphodiesterases"/>
    <property type="match status" value="1"/>
</dbReference>
<sequence length="389" mass="43762">MMLLSQPGIWLLVSLFLCSSVNSISLWKSHPLVAGSNEPDQKRPDTPSSPRPLGITGAALLNYFEQNLRTMEVPDTAGVPQDSAYYTALTHYLGLCGARSENCDPGQSAVAKLTRDVPVLTRVHSHNDYWRRVPLLQALAYGVASVEADVWLENNGTTLLVGHNRVFLEPAHDLGRLYIEPITRMLQEVNCKSENKGDPYGIFYNAPEEQLLLYIDFKSLDRKLTYKLLLDYLKPLIDNNFISYYDMDAKRFVSRPVTVVLTGNYPSDEEIGVPSPRRYTFLDAPLGRLSSVGDEFTANNVSVVASSSLLELMLRCGKASNPSLTEQTAWESYGCLVEYVREAHRRDLRARIWGLPDWPVSTRENLWDMLTDMGVDYLNVDDLDAVSKF</sequence>
<organism>
    <name type="scientific">Eremothecium gossypii (strain ATCC 10895 / CBS 109.51 / FGSC 9923 / NRRL Y-1056)</name>
    <name type="common">Yeast</name>
    <name type="synonym">Ashbya gossypii</name>
    <dbReference type="NCBI Taxonomy" id="284811"/>
    <lineage>
        <taxon>Eukaryota</taxon>
        <taxon>Fungi</taxon>
        <taxon>Dikarya</taxon>
        <taxon>Ascomycota</taxon>
        <taxon>Saccharomycotina</taxon>
        <taxon>Saccharomycetes</taxon>
        <taxon>Saccharomycetales</taxon>
        <taxon>Saccharomycetaceae</taxon>
        <taxon>Eremothecium</taxon>
    </lineage>
</organism>
<accession>Q75E59</accession>
<proteinExistence type="inferred from homology"/>
<gene>
    <name type="primary">AIM6</name>
    <name type="ordered locus">ABL189W</name>
</gene>
<evidence type="ECO:0000255" key="1"/>
<evidence type="ECO:0000305" key="2"/>
<feature type="signal peptide" evidence="1">
    <location>
        <begin position="1"/>
        <end position="23"/>
    </location>
</feature>
<feature type="chain" id="PRO_0000408705" description="Altered inheritance of mitochondria protein 6">
    <location>
        <begin position="24"/>
        <end position="389"/>
    </location>
</feature>
<reference key="1">
    <citation type="journal article" date="2004" name="Science">
        <title>The Ashbya gossypii genome as a tool for mapping the ancient Saccharomyces cerevisiae genome.</title>
        <authorList>
            <person name="Dietrich F.S."/>
            <person name="Voegeli S."/>
            <person name="Brachat S."/>
            <person name="Lerch A."/>
            <person name="Gates K."/>
            <person name="Steiner S."/>
            <person name="Mohr C."/>
            <person name="Poehlmann R."/>
            <person name="Luedi P."/>
            <person name="Choi S."/>
            <person name="Wing R.A."/>
            <person name="Flavier A."/>
            <person name="Gaffney T.D."/>
            <person name="Philippsen P."/>
        </authorList>
    </citation>
    <scope>NUCLEOTIDE SEQUENCE [LARGE SCALE GENOMIC DNA]</scope>
    <source>
        <strain>ATCC 10895 / CBS 109.51 / FGSC 9923 / NRRL Y-1056</strain>
    </source>
</reference>
<reference key="2">
    <citation type="journal article" date="2013" name="G3 (Bethesda)">
        <title>Genomes of Ashbya fungi isolated from insects reveal four mating-type loci, numerous translocations, lack of transposons, and distinct gene duplications.</title>
        <authorList>
            <person name="Dietrich F.S."/>
            <person name="Voegeli S."/>
            <person name="Kuo S."/>
            <person name="Philippsen P."/>
        </authorList>
    </citation>
    <scope>GENOME REANNOTATION</scope>
    <source>
        <strain>ATCC 10895 / CBS 109.51 / FGSC 9923 / NRRL Y-1056</strain>
    </source>
</reference>
<comment type="similarity">
    <text evidence="2">Belongs to the AIM6 family.</text>
</comment>
<keyword id="KW-1185">Reference proteome</keyword>
<keyword id="KW-0732">Signal</keyword>